<reference key="1">
    <citation type="submission" date="2004-08" db="EMBL/GenBank/DDBJ databases">
        <authorList>
            <consortium name="NIH - Zebrafish Gene Collection (ZGC) project"/>
        </authorList>
    </citation>
    <scope>NUCLEOTIDE SEQUENCE [LARGE SCALE MRNA]</scope>
    <source>
        <tissue>Embryo</tissue>
    </source>
</reference>
<accession>Q68FN7</accession>
<dbReference type="EMBL" id="BC079507">
    <property type="protein sequence ID" value="AAH79507.1"/>
    <property type="molecule type" value="mRNA"/>
</dbReference>
<dbReference type="RefSeq" id="NP_001004004.1">
    <property type="nucleotide sequence ID" value="NM_001004004.2"/>
</dbReference>
<dbReference type="SMR" id="Q68FN7"/>
<dbReference type="FunCoup" id="Q68FN7">
    <property type="interactions" value="1932"/>
</dbReference>
<dbReference type="STRING" id="7955.ENSDARP00000039864"/>
<dbReference type="PaxDb" id="7955-ENSDARP00000039864"/>
<dbReference type="Ensembl" id="ENSDART00000039865">
    <property type="protein sequence ID" value="ENSDARP00000039864"/>
    <property type="gene ID" value="ENSDARG00000030139"/>
</dbReference>
<dbReference type="GeneID" id="445500"/>
<dbReference type="KEGG" id="dre:445500"/>
<dbReference type="AGR" id="ZFIN:ZDB-GENE-040822-17"/>
<dbReference type="CTD" id="445500"/>
<dbReference type="ZFIN" id="ZDB-GENE-040822-17">
    <property type="gene designation" value="sdhdb"/>
</dbReference>
<dbReference type="eggNOG" id="KOG4097">
    <property type="taxonomic scope" value="Eukaryota"/>
</dbReference>
<dbReference type="HOGENOM" id="CLU_096618_1_1_1"/>
<dbReference type="InParanoid" id="Q68FN7"/>
<dbReference type="OMA" id="VMHQHWG"/>
<dbReference type="OrthoDB" id="18577at2759"/>
<dbReference type="PhylomeDB" id="Q68FN7"/>
<dbReference type="TreeFam" id="TF313310"/>
<dbReference type="Reactome" id="R-DRE-71403">
    <property type="pathway name" value="Citric acid cycle (TCA cycle)"/>
</dbReference>
<dbReference type="UniPathway" id="UPA00223"/>
<dbReference type="PRO" id="PR:Q68FN7"/>
<dbReference type="Proteomes" id="UP000000437">
    <property type="component" value="Chromosome 15"/>
</dbReference>
<dbReference type="Bgee" id="ENSDARG00000030139">
    <property type="expression patterns" value="Expressed in heart and 28 other cell types or tissues"/>
</dbReference>
<dbReference type="GO" id="GO:0005743">
    <property type="term" value="C:mitochondrial inner membrane"/>
    <property type="evidence" value="ECO:0000250"/>
    <property type="project" value="UniProtKB"/>
</dbReference>
<dbReference type="GO" id="GO:0045273">
    <property type="term" value="C:respiratory chain complex II (succinate dehydrogenase)"/>
    <property type="evidence" value="ECO:0000250"/>
    <property type="project" value="UniProtKB"/>
</dbReference>
<dbReference type="GO" id="GO:0020037">
    <property type="term" value="F:heme binding"/>
    <property type="evidence" value="ECO:0000250"/>
    <property type="project" value="UniProtKB"/>
</dbReference>
<dbReference type="GO" id="GO:0046872">
    <property type="term" value="F:metal ion binding"/>
    <property type="evidence" value="ECO:0007669"/>
    <property type="project" value="UniProtKB-KW"/>
</dbReference>
<dbReference type="GO" id="GO:0048039">
    <property type="term" value="F:ubiquinone binding"/>
    <property type="evidence" value="ECO:0000250"/>
    <property type="project" value="UniProtKB"/>
</dbReference>
<dbReference type="GO" id="GO:0006121">
    <property type="term" value="P:mitochondrial electron transport, succinate to ubiquinone"/>
    <property type="evidence" value="ECO:0000318"/>
    <property type="project" value="GO_Central"/>
</dbReference>
<dbReference type="GO" id="GO:0006099">
    <property type="term" value="P:tricarboxylic acid cycle"/>
    <property type="evidence" value="ECO:0000318"/>
    <property type="project" value="GO_Central"/>
</dbReference>
<dbReference type="CDD" id="cd03496">
    <property type="entry name" value="SQR_TypeC_CybS"/>
    <property type="match status" value="1"/>
</dbReference>
<dbReference type="Gene3D" id="1.20.1300.10">
    <property type="entry name" value="Fumarate reductase/succinate dehydrogenase, transmembrane subunit"/>
    <property type="match status" value="1"/>
</dbReference>
<dbReference type="InterPro" id="IPR007992">
    <property type="entry name" value="CybS"/>
</dbReference>
<dbReference type="InterPro" id="IPR034804">
    <property type="entry name" value="SQR/QFR_C/D"/>
</dbReference>
<dbReference type="PANTHER" id="PTHR13337">
    <property type="entry name" value="SUCCINATE DEHYDROGENASE"/>
    <property type="match status" value="1"/>
</dbReference>
<dbReference type="PANTHER" id="PTHR13337:SF2">
    <property type="entry name" value="SUCCINATE DEHYDROGENASE [UBIQUINONE] CYTOCHROME B SMALL SUBUNIT, MITOCHONDRIAL"/>
    <property type="match status" value="1"/>
</dbReference>
<dbReference type="Pfam" id="PF05328">
    <property type="entry name" value="CybS"/>
    <property type="match status" value="1"/>
</dbReference>
<dbReference type="SUPFAM" id="SSF81343">
    <property type="entry name" value="Fumarate reductase respiratory complex transmembrane subunits"/>
    <property type="match status" value="1"/>
</dbReference>
<proteinExistence type="evidence at transcript level"/>
<comment type="function">
    <text evidence="1 2">Membrane-anchoring subunit of succinate dehydrogenase (SDH) that is involved in complex II of the mitochondrial electron transport chain and is responsible for transferring electrons from succinate to ubiquinone (coenzyme Q) (By similarity). SDH also oxidizes malate to the non-canonical enol form of oxaloacetate, enol-oxaloacetate. Enol-oxaloacetate, which is a potent inhibitor of the succinate dehydrogenase activity, is further isomerized into keto-oxaloacetate (By similarity).</text>
</comment>
<comment type="pathway">
    <text evidence="1">Carbohydrate metabolism; tricarboxylic acid cycle.</text>
</comment>
<comment type="subunit">
    <text evidence="1">Component of complex II composed of four subunits: the flavoprotein (FP) SDHA, iron-sulfur protein (IP) SDHB, and a cytochrome b560 composed of SDHC and SDHD.</text>
</comment>
<comment type="subcellular location">
    <subcellularLocation>
        <location evidence="1">Mitochondrion inner membrane</location>
        <topology evidence="3">Multi-pass membrane protein</topology>
    </subcellularLocation>
</comment>
<comment type="similarity">
    <text evidence="4">Belongs to the CybS family.</text>
</comment>
<evidence type="ECO:0000250" key="1">
    <source>
        <dbReference type="UniProtKB" id="O14521"/>
    </source>
</evidence>
<evidence type="ECO:0000250" key="2">
    <source>
        <dbReference type="UniProtKB" id="Q95123"/>
    </source>
</evidence>
<evidence type="ECO:0000255" key="3"/>
<evidence type="ECO:0000305" key="4"/>
<organism>
    <name type="scientific">Danio rerio</name>
    <name type="common">Zebrafish</name>
    <name type="synonym">Brachydanio rerio</name>
    <dbReference type="NCBI Taxonomy" id="7955"/>
    <lineage>
        <taxon>Eukaryota</taxon>
        <taxon>Metazoa</taxon>
        <taxon>Chordata</taxon>
        <taxon>Craniata</taxon>
        <taxon>Vertebrata</taxon>
        <taxon>Euteleostomi</taxon>
        <taxon>Actinopterygii</taxon>
        <taxon>Neopterygii</taxon>
        <taxon>Teleostei</taxon>
        <taxon>Ostariophysi</taxon>
        <taxon>Cypriniformes</taxon>
        <taxon>Danionidae</taxon>
        <taxon>Danioninae</taxon>
        <taxon>Danio</taxon>
    </lineage>
</organism>
<keyword id="KW-0249">Electron transport</keyword>
<keyword id="KW-0349">Heme</keyword>
<keyword id="KW-0408">Iron</keyword>
<keyword id="KW-0472">Membrane</keyword>
<keyword id="KW-0479">Metal-binding</keyword>
<keyword id="KW-0496">Mitochondrion</keyword>
<keyword id="KW-0999">Mitochondrion inner membrane</keyword>
<keyword id="KW-1185">Reference proteome</keyword>
<keyword id="KW-0809">Transit peptide</keyword>
<keyword id="KW-0812">Transmembrane</keyword>
<keyword id="KW-1133">Transmembrane helix</keyword>
<keyword id="KW-0813">Transport</keyword>
<keyword id="KW-0816">Tricarboxylic acid cycle</keyword>
<feature type="transit peptide" description="Mitochondrion" evidence="3">
    <location>
        <begin position="1"/>
        <end position="29"/>
    </location>
</feature>
<feature type="chain" id="PRO_0000343806" description="Succinate dehydrogenase [ubiquinone] cytochrome b small subunit B, mitochondrial">
    <location>
        <begin position="30"/>
        <end position="158"/>
    </location>
</feature>
<feature type="topological domain" description="Mitochondrial matrix" evidence="1">
    <location>
        <begin position="30"/>
        <end position="62"/>
    </location>
</feature>
<feature type="transmembrane region" description="Helical" evidence="1">
    <location>
        <begin position="63"/>
        <end position="84"/>
    </location>
</feature>
<feature type="topological domain" description="Mitochondrial intermembrane" evidence="1">
    <location>
        <begin position="85"/>
        <end position="89"/>
    </location>
</feature>
<feature type="transmembrane region" description="Helical" evidence="1">
    <location>
        <begin position="90"/>
        <end position="110"/>
    </location>
</feature>
<feature type="topological domain" description="Mitochondrial matrix" evidence="1">
    <location>
        <begin position="111"/>
        <end position="119"/>
    </location>
</feature>
<feature type="transmembrane region" description="Helical" evidence="1">
    <location>
        <begin position="120"/>
        <end position="141"/>
    </location>
</feature>
<feature type="topological domain" description="Mitochondrial intermembrane" evidence="1">
    <location>
        <begin position="142"/>
        <end position="158"/>
    </location>
</feature>
<feature type="binding site" description="axial binding residue" evidence="1">
    <location>
        <position position="101"/>
    </location>
    <ligand>
        <name>heme b</name>
        <dbReference type="ChEBI" id="CHEBI:60344"/>
        <note>ligand shared with SDHC</note>
    </ligand>
    <ligandPart>
        <name>Fe</name>
        <dbReference type="ChEBI" id="CHEBI:18248"/>
    </ligandPart>
</feature>
<feature type="binding site" evidence="1">
    <location>
        <position position="113"/>
    </location>
    <ligand>
        <name>a ubiquinone</name>
        <dbReference type="ChEBI" id="CHEBI:16389"/>
        <note>ligand shared with IP/SDHB</note>
    </ligand>
</feature>
<protein>
    <recommendedName>
        <fullName>Succinate dehydrogenase [ubiquinone] cytochrome b small subunit B, mitochondrial</fullName>
        <shortName>CybS-B</shortName>
    </recommendedName>
    <alternativeName>
        <fullName>Malate dehydrogenase [quinone] cytochrome b small subunit</fullName>
    </alternativeName>
    <alternativeName>
        <fullName>Succinate dehydrogenase complex subunit D-B</fullName>
    </alternativeName>
    <alternativeName>
        <fullName>Succinate-ubiquinone oxidoreductase cytochrome b small subunit B</fullName>
    </alternativeName>
    <alternativeName>
        <fullName>Succinate-ubiquinone reductase membrane anchor subunit B</fullName>
    </alternativeName>
</protein>
<gene>
    <name type="primary">sdhdb</name>
    <name type="synonym">sdhd</name>
    <name type="synonym">sdhda</name>
    <name type="ORF">zgc:100986</name>
</gene>
<name>DHSDB_DANRE</name>
<sequence length="158" mass="16973">MAALVRISSLCHRGVSPLLFRPSSLIRPLAVQQKDHDCSYLISARIHATPSNYAGSGSKAATMHWTGERILSIALLSLAPVAYFCPSPAVDYSLAAALTLHGHWGLGQVVTDYVHGDAKIKMANAGLFVLSTVTFAGLCYFNYHDVGICKAVALLWSK</sequence>